<comment type="function">
    <text evidence="1">ATP-dependent rRNA helicase required for pre-ribosomal RNA processing. Involved in the maturation of the 35S-pre-rRNA and to its cleavage to mature 18S rRNA.</text>
</comment>
<comment type="catalytic activity">
    <reaction evidence="1">
        <text>ATP + H2O = ADP + phosphate + H(+)</text>
        <dbReference type="Rhea" id="RHEA:13065"/>
        <dbReference type="ChEBI" id="CHEBI:15377"/>
        <dbReference type="ChEBI" id="CHEBI:15378"/>
        <dbReference type="ChEBI" id="CHEBI:30616"/>
        <dbReference type="ChEBI" id="CHEBI:43474"/>
        <dbReference type="ChEBI" id="CHEBI:456216"/>
        <dbReference type="EC" id="3.6.4.13"/>
    </reaction>
</comment>
<comment type="subunit">
    <text evidence="1">Interacts with the SSU processome.</text>
</comment>
<comment type="subcellular location">
    <subcellularLocation>
        <location evidence="6">Nucleus</location>
    </subcellularLocation>
</comment>
<comment type="domain">
    <text evidence="6">The Q motif is unique to and characteristic of the DEAD box family of RNA helicases and controls ATP binding and hydrolysis.</text>
</comment>
<comment type="similarity">
    <text evidence="6">Belongs to the DEAD box helicase family. DDX47/RRP3 subfamily.</text>
</comment>
<reference key="1">
    <citation type="journal article" date="2007" name="Proc. Natl. Acad. Sci. U.S.A.">
        <title>Genome sequencing and comparative analysis of Saccharomyces cerevisiae strain YJM789.</title>
        <authorList>
            <person name="Wei W."/>
            <person name="McCusker J.H."/>
            <person name="Hyman R.W."/>
            <person name="Jones T."/>
            <person name="Ning Y."/>
            <person name="Cao Z."/>
            <person name="Gu Z."/>
            <person name="Bruno D."/>
            <person name="Miranda M."/>
            <person name="Nguyen M."/>
            <person name="Wilhelmy J."/>
            <person name="Komp C."/>
            <person name="Tamse R."/>
            <person name="Wang X."/>
            <person name="Jia P."/>
            <person name="Luedi P."/>
            <person name="Oefner P.J."/>
            <person name="David L."/>
            <person name="Dietrich F.S."/>
            <person name="Li Y."/>
            <person name="Davis R.W."/>
            <person name="Steinmetz L.M."/>
        </authorList>
    </citation>
    <scope>NUCLEOTIDE SEQUENCE [LARGE SCALE GENOMIC DNA]</scope>
    <source>
        <strain>YJM789</strain>
    </source>
</reference>
<name>RRP3_YEAS7</name>
<organism>
    <name type="scientific">Saccharomyces cerevisiae (strain YJM789)</name>
    <name type="common">Baker's yeast</name>
    <dbReference type="NCBI Taxonomy" id="307796"/>
    <lineage>
        <taxon>Eukaryota</taxon>
        <taxon>Fungi</taxon>
        <taxon>Dikarya</taxon>
        <taxon>Ascomycota</taxon>
        <taxon>Saccharomycotina</taxon>
        <taxon>Saccharomycetes</taxon>
        <taxon>Saccharomycetales</taxon>
        <taxon>Saccharomycetaceae</taxon>
        <taxon>Saccharomyces</taxon>
    </lineage>
</organism>
<protein>
    <recommendedName>
        <fullName evidence="6">ATP-dependent rRNA helicase RRP3</fullName>
        <ecNumber evidence="1">3.6.4.13</ecNumber>
    </recommendedName>
    <alternativeName>
        <fullName>Ribosomal RNA-processing protein 3</fullName>
    </alternativeName>
</protein>
<accession>A6ZSX1</accession>
<gene>
    <name evidence="1" type="primary">RRP3</name>
    <name type="ORF">SCY_2455</name>
</gene>
<keyword id="KW-0067">ATP-binding</keyword>
<keyword id="KW-0175">Coiled coil</keyword>
<keyword id="KW-0347">Helicase</keyword>
<keyword id="KW-0378">Hydrolase</keyword>
<keyword id="KW-0547">Nucleotide-binding</keyword>
<keyword id="KW-0539">Nucleus</keyword>
<keyword id="KW-0597">Phosphoprotein</keyword>
<keyword id="KW-0690">Ribosome biogenesis</keyword>
<keyword id="KW-0694">RNA-binding</keyword>
<keyword id="KW-0698">rRNA processing</keyword>
<sequence>MSKIVKRKEKKANDELTSLAEKIRAKALENQKKLIEAEKEGGSESDSEEDATAEKKKVLKSKSKSTVSTQNENTNEDESFESFSELNLVPELIQACKNLNYSKPTPIQSKAIPPALEGHDIIGLAQTGSGKTAAFAIPILNRLWHDQEPYYACILAPTRELAQQIKETFDSLGSLMGVRSTCIVGGMNMMDQARDLMRKPHIIIATPGRLMDHLENTKGFSLRKLKFLVMDEADRLLDMEFGPVLDRILKIIPTQERTTYLFSATMTSKIDKLQRASLTNPVKCAVSNKYQTVDTLVQTLMVVPGGLKNTYLIYLLNEFIGKTMIIFTRTKANAERLSGLCNLLEFSATALHGDLNQNQRMGALDLFKAGKRSILVATDVAARGLDIPSVDIVVNYDIPVDSKSYIHRVGRTARAGRSGKSISLVSQYDLELILRIEEVLGKKLPKESVDKNIILTLRDSVDKANGEVVMEMNRRNKEKIARGKGRRGRMMTRENMDMGER</sequence>
<feature type="chain" id="PRO_0000310234" description="ATP-dependent rRNA helicase RRP3">
    <location>
        <begin position="1"/>
        <end position="501"/>
    </location>
</feature>
<feature type="domain" description="Helicase ATP-binding" evidence="3">
    <location>
        <begin position="112"/>
        <end position="284"/>
    </location>
</feature>
<feature type="domain" description="Helicase C-terminal" evidence="4">
    <location>
        <begin position="307"/>
        <end position="461"/>
    </location>
</feature>
<feature type="region of interest" description="Disordered" evidence="5">
    <location>
        <begin position="36"/>
        <end position="79"/>
    </location>
</feature>
<feature type="region of interest" description="Disordered" evidence="5">
    <location>
        <begin position="480"/>
        <end position="501"/>
    </location>
</feature>
<feature type="coiled-coil region" evidence="2">
    <location>
        <begin position="3"/>
        <end position="44"/>
    </location>
</feature>
<feature type="short sequence motif" description="Q motif" evidence="6">
    <location>
        <begin position="81"/>
        <end position="109"/>
    </location>
</feature>
<feature type="short sequence motif" description="DEAD box" evidence="6">
    <location>
        <begin position="231"/>
        <end position="234"/>
    </location>
</feature>
<feature type="compositionally biased region" description="Basic and acidic residues" evidence="5">
    <location>
        <begin position="491"/>
        <end position="501"/>
    </location>
</feature>
<feature type="binding site" evidence="3">
    <location>
        <begin position="125"/>
        <end position="132"/>
    </location>
    <ligand>
        <name>ATP</name>
        <dbReference type="ChEBI" id="CHEBI:30616"/>
    </ligand>
</feature>
<feature type="modified residue" description="Phosphoserine" evidence="1">
    <location>
        <position position="43"/>
    </location>
</feature>
<feature type="modified residue" description="Phosphoserine" evidence="1">
    <location>
        <position position="45"/>
    </location>
</feature>
<feature type="modified residue" description="Phosphoserine" evidence="1">
    <location>
        <position position="47"/>
    </location>
</feature>
<proteinExistence type="inferred from homology"/>
<evidence type="ECO:0000250" key="1">
    <source>
        <dbReference type="UniProtKB" id="P38712"/>
    </source>
</evidence>
<evidence type="ECO:0000255" key="2"/>
<evidence type="ECO:0000255" key="3">
    <source>
        <dbReference type="PROSITE-ProRule" id="PRU00541"/>
    </source>
</evidence>
<evidence type="ECO:0000255" key="4">
    <source>
        <dbReference type="PROSITE-ProRule" id="PRU00542"/>
    </source>
</evidence>
<evidence type="ECO:0000256" key="5">
    <source>
        <dbReference type="SAM" id="MobiDB-lite"/>
    </source>
</evidence>
<evidence type="ECO:0000305" key="6"/>
<dbReference type="EC" id="3.6.4.13" evidence="1"/>
<dbReference type="EMBL" id="AAFW02000082">
    <property type="protein sequence ID" value="EDN62302.1"/>
    <property type="molecule type" value="Genomic_DNA"/>
</dbReference>
<dbReference type="SMR" id="A6ZSX1"/>
<dbReference type="HOGENOM" id="CLU_003041_1_1_1"/>
<dbReference type="Proteomes" id="UP000007060">
    <property type="component" value="Unassembled WGS sequence"/>
</dbReference>
<dbReference type="GO" id="GO:0005829">
    <property type="term" value="C:cytosol"/>
    <property type="evidence" value="ECO:0007669"/>
    <property type="project" value="TreeGrafter"/>
</dbReference>
<dbReference type="GO" id="GO:0005634">
    <property type="term" value="C:nucleus"/>
    <property type="evidence" value="ECO:0007669"/>
    <property type="project" value="UniProtKB-SubCell"/>
</dbReference>
<dbReference type="GO" id="GO:0005524">
    <property type="term" value="F:ATP binding"/>
    <property type="evidence" value="ECO:0007669"/>
    <property type="project" value="UniProtKB-KW"/>
</dbReference>
<dbReference type="GO" id="GO:0016887">
    <property type="term" value="F:ATP hydrolysis activity"/>
    <property type="evidence" value="ECO:0007669"/>
    <property type="project" value="RHEA"/>
</dbReference>
<dbReference type="GO" id="GO:0003723">
    <property type="term" value="F:RNA binding"/>
    <property type="evidence" value="ECO:0007669"/>
    <property type="project" value="UniProtKB-KW"/>
</dbReference>
<dbReference type="GO" id="GO:0003724">
    <property type="term" value="F:RNA helicase activity"/>
    <property type="evidence" value="ECO:0007669"/>
    <property type="project" value="UniProtKB-EC"/>
</dbReference>
<dbReference type="GO" id="GO:0006364">
    <property type="term" value="P:rRNA processing"/>
    <property type="evidence" value="ECO:0007669"/>
    <property type="project" value="UniProtKB-KW"/>
</dbReference>
<dbReference type="CDD" id="cd17954">
    <property type="entry name" value="DEADc_DDX47"/>
    <property type="match status" value="1"/>
</dbReference>
<dbReference type="CDD" id="cd18787">
    <property type="entry name" value="SF2_C_DEAD"/>
    <property type="match status" value="1"/>
</dbReference>
<dbReference type="FunFam" id="3.40.50.300:FF:000626">
    <property type="entry name" value="probable ATP-dependent RNA helicase DDX47"/>
    <property type="match status" value="1"/>
</dbReference>
<dbReference type="FunFam" id="3.40.50.300:FF:000681">
    <property type="entry name" value="probable ATP-dependent RNA helicase DDX47"/>
    <property type="match status" value="1"/>
</dbReference>
<dbReference type="Gene3D" id="3.40.50.300">
    <property type="entry name" value="P-loop containing nucleotide triphosphate hydrolases"/>
    <property type="match status" value="2"/>
</dbReference>
<dbReference type="InterPro" id="IPR044765">
    <property type="entry name" value="DDX47/Rrp3_DEADc"/>
</dbReference>
<dbReference type="InterPro" id="IPR011545">
    <property type="entry name" value="DEAD/DEAH_box_helicase_dom"/>
</dbReference>
<dbReference type="InterPro" id="IPR050079">
    <property type="entry name" value="DEAD_box_RNA_helicase"/>
</dbReference>
<dbReference type="InterPro" id="IPR014001">
    <property type="entry name" value="Helicase_ATP-bd"/>
</dbReference>
<dbReference type="InterPro" id="IPR001650">
    <property type="entry name" value="Helicase_C-like"/>
</dbReference>
<dbReference type="InterPro" id="IPR027417">
    <property type="entry name" value="P-loop_NTPase"/>
</dbReference>
<dbReference type="InterPro" id="IPR000629">
    <property type="entry name" value="RNA-helicase_DEAD-box_CS"/>
</dbReference>
<dbReference type="InterPro" id="IPR014014">
    <property type="entry name" value="RNA_helicase_DEAD_Q_motif"/>
</dbReference>
<dbReference type="PANTHER" id="PTHR47959:SF24">
    <property type="entry name" value="ATP-DEPENDENT RNA HELICASE"/>
    <property type="match status" value="1"/>
</dbReference>
<dbReference type="PANTHER" id="PTHR47959">
    <property type="entry name" value="ATP-DEPENDENT RNA HELICASE RHLE-RELATED"/>
    <property type="match status" value="1"/>
</dbReference>
<dbReference type="Pfam" id="PF00270">
    <property type="entry name" value="DEAD"/>
    <property type="match status" value="1"/>
</dbReference>
<dbReference type="Pfam" id="PF00271">
    <property type="entry name" value="Helicase_C"/>
    <property type="match status" value="1"/>
</dbReference>
<dbReference type="SMART" id="SM00487">
    <property type="entry name" value="DEXDc"/>
    <property type="match status" value="1"/>
</dbReference>
<dbReference type="SMART" id="SM00490">
    <property type="entry name" value="HELICc"/>
    <property type="match status" value="1"/>
</dbReference>
<dbReference type="SUPFAM" id="SSF52540">
    <property type="entry name" value="P-loop containing nucleoside triphosphate hydrolases"/>
    <property type="match status" value="1"/>
</dbReference>
<dbReference type="PROSITE" id="PS00039">
    <property type="entry name" value="DEAD_ATP_HELICASE"/>
    <property type="match status" value="1"/>
</dbReference>
<dbReference type="PROSITE" id="PS51192">
    <property type="entry name" value="HELICASE_ATP_BIND_1"/>
    <property type="match status" value="1"/>
</dbReference>
<dbReference type="PROSITE" id="PS51194">
    <property type="entry name" value="HELICASE_CTER"/>
    <property type="match status" value="1"/>
</dbReference>
<dbReference type="PROSITE" id="PS51195">
    <property type="entry name" value="Q_MOTIF"/>
    <property type="match status" value="1"/>
</dbReference>